<protein>
    <recommendedName>
        <fullName evidence="1">Holliday junction branch migration complex subunit RuvA</fullName>
    </recommendedName>
</protein>
<comment type="function">
    <text evidence="1">The RuvA-RuvB-RuvC complex processes Holliday junction (HJ) DNA during genetic recombination and DNA repair, while the RuvA-RuvB complex plays an important role in the rescue of blocked DNA replication forks via replication fork reversal (RFR). RuvA specifically binds to HJ cruciform DNA, conferring on it an open structure. The RuvB hexamer acts as an ATP-dependent pump, pulling dsDNA into and through the RuvAB complex. HJ branch migration allows RuvC to scan DNA until it finds its consensus sequence, where it cleaves and resolves the cruciform DNA.</text>
</comment>
<comment type="subunit">
    <text evidence="1">Homotetramer. Forms an RuvA(8)-RuvB(12)-Holliday junction (HJ) complex. HJ DNA is sandwiched between 2 RuvA tetramers; dsDNA enters through RuvA and exits via RuvB. An RuvB hexamer assembles on each DNA strand where it exits the tetramer. Each RuvB hexamer is contacted by two RuvA subunits (via domain III) on 2 adjacent RuvB subunits; this complex drives branch migration. In the full resolvosome a probable DNA-RuvA(4)-RuvB(12)-RuvC(2) complex forms which resolves the HJ.</text>
</comment>
<comment type="subcellular location">
    <subcellularLocation>
        <location evidence="1">Cytoplasm</location>
    </subcellularLocation>
</comment>
<comment type="domain">
    <text evidence="1">Has three domains with a flexible linker between the domains II and III and assumes an 'L' shape. Domain III is highly mobile and contacts RuvB.</text>
</comment>
<comment type="similarity">
    <text evidence="1">Belongs to the RuvA family.</text>
</comment>
<keyword id="KW-0963">Cytoplasm</keyword>
<keyword id="KW-0227">DNA damage</keyword>
<keyword id="KW-0233">DNA recombination</keyword>
<keyword id="KW-0234">DNA repair</keyword>
<keyword id="KW-0238">DNA-binding</keyword>
<keyword id="KW-1185">Reference proteome</keyword>
<evidence type="ECO:0000255" key="1">
    <source>
        <dbReference type="HAMAP-Rule" id="MF_00031"/>
    </source>
</evidence>
<name>RUVA_STAEQ</name>
<dbReference type="EMBL" id="CP000029">
    <property type="protein sequence ID" value="AAW54599.1"/>
    <property type="molecule type" value="Genomic_DNA"/>
</dbReference>
<dbReference type="RefSeq" id="WP_001830895.1">
    <property type="nucleotide sequence ID" value="NC_002976.3"/>
</dbReference>
<dbReference type="SMR" id="Q5HNQ9"/>
<dbReference type="STRING" id="176279.SERP1206"/>
<dbReference type="GeneID" id="50018560"/>
<dbReference type="KEGG" id="ser:SERP1206"/>
<dbReference type="eggNOG" id="COG0632">
    <property type="taxonomic scope" value="Bacteria"/>
</dbReference>
<dbReference type="HOGENOM" id="CLU_087936_1_0_9"/>
<dbReference type="Proteomes" id="UP000000531">
    <property type="component" value="Chromosome"/>
</dbReference>
<dbReference type="GO" id="GO:0005737">
    <property type="term" value="C:cytoplasm"/>
    <property type="evidence" value="ECO:0007669"/>
    <property type="project" value="UniProtKB-SubCell"/>
</dbReference>
<dbReference type="GO" id="GO:0009379">
    <property type="term" value="C:Holliday junction helicase complex"/>
    <property type="evidence" value="ECO:0007669"/>
    <property type="project" value="InterPro"/>
</dbReference>
<dbReference type="GO" id="GO:0048476">
    <property type="term" value="C:Holliday junction resolvase complex"/>
    <property type="evidence" value="ECO:0007669"/>
    <property type="project" value="UniProtKB-UniRule"/>
</dbReference>
<dbReference type="GO" id="GO:0005524">
    <property type="term" value="F:ATP binding"/>
    <property type="evidence" value="ECO:0007669"/>
    <property type="project" value="InterPro"/>
</dbReference>
<dbReference type="GO" id="GO:0000400">
    <property type="term" value="F:four-way junction DNA binding"/>
    <property type="evidence" value="ECO:0007669"/>
    <property type="project" value="UniProtKB-UniRule"/>
</dbReference>
<dbReference type="GO" id="GO:0009378">
    <property type="term" value="F:four-way junction helicase activity"/>
    <property type="evidence" value="ECO:0007669"/>
    <property type="project" value="InterPro"/>
</dbReference>
<dbReference type="GO" id="GO:0006310">
    <property type="term" value="P:DNA recombination"/>
    <property type="evidence" value="ECO:0007669"/>
    <property type="project" value="UniProtKB-UniRule"/>
</dbReference>
<dbReference type="GO" id="GO:0006281">
    <property type="term" value="P:DNA repair"/>
    <property type="evidence" value="ECO:0007669"/>
    <property type="project" value="UniProtKB-UniRule"/>
</dbReference>
<dbReference type="CDD" id="cd14332">
    <property type="entry name" value="UBA_RuvA_C"/>
    <property type="match status" value="1"/>
</dbReference>
<dbReference type="Gene3D" id="1.10.150.20">
    <property type="entry name" value="5' to 3' exonuclease, C-terminal subdomain"/>
    <property type="match status" value="1"/>
</dbReference>
<dbReference type="Gene3D" id="2.40.50.140">
    <property type="entry name" value="Nucleic acid-binding proteins"/>
    <property type="match status" value="1"/>
</dbReference>
<dbReference type="HAMAP" id="MF_00031">
    <property type="entry name" value="DNA_HJ_migration_RuvA"/>
    <property type="match status" value="1"/>
</dbReference>
<dbReference type="InterPro" id="IPR013849">
    <property type="entry name" value="DNA_helicase_Holl-junc_RuvA_I"/>
</dbReference>
<dbReference type="InterPro" id="IPR003583">
    <property type="entry name" value="Hlx-hairpin-Hlx_DNA-bd_motif"/>
</dbReference>
<dbReference type="InterPro" id="IPR012340">
    <property type="entry name" value="NA-bd_OB-fold"/>
</dbReference>
<dbReference type="InterPro" id="IPR000085">
    <property type="entry name" value="RuvA"/>
</dbReference>
<dbReference type="InterPro" id="IPR010994">
    <property type="entry name" value="RuvA_2-like"/>
</dbReference>
<dbReference type="InterPro" id="IPR011114">
    <property type="entry name" value="RuvA_C"/>
</dbReference>
<dbReference type="InterPro" id="IPR036267">
    <property type="entry name" value="RuvA_C_sf"/>
</dbReference>
<dbReference type="NCBIfam" id="TIGR00084">
    <property type="entry name" value="ruvA"/>
    <property type="match status" value="1"/>
</dbReference>
<dbReference type="Pfam" id="PF14520">
    <property type="entry name" value="HHH_5"/>
    <property type="match status" value="1"/>
</dbReference>
<dbReference type="Pfam" id="PF07499">
    <property type="entry name" value="RuvA_C"/>
    <property type="match status" value="1"/>
</dbReference>
<dbReference type="Pfam" id="PF01330">
    <property type="entry name" value="RuvA_N"/>
    <property type="match status" value="1"/>
</dbReference>
<dbReference type="SMART" id="SM00278">
    <property type="entry name" value="HhH1"/>
    <property type="match status" value="2"/>
</dbReference>
<dbReference type="SUPFAM" id="SSF46929">
    <property type="entry name" value="DNA helicase RuvA subunit, C-terminal domain"/>
    <property type="match status" value="1"/>
</dbReference>
<dbReference type="SUPFAM" id="SSF50249">
    <property type="entry name" value="Nucleic acid-binding proteins"/>
    <property type="match status" value="1"/>
</dbReference>
<dbReference type="SUPFAM" id="SSF47781">
    <property type="entry name" value="RuvA domain 2-like"/>
    <property type="match status" value="1"/>
</dbReference>
<proteinExistence type="inferred from homology"/>
<organism>
    <name type="scientific">Staphylococcus epidermidis (strain ATCC 35984 / DSM 28319 / BCRC 17069 / CCUG 31568 / BM 3577 / RP62A)</name>
    <dbReference type="NCBI Taxonomy" id="176279"/>
    <lineage>
        <taxon>Bacteria</taxon>
        <taxon>Bacillati</taxon>
        <taxon>Bacillota</taxon>
        <taxon>Bacilli</taxon>
        <taxon>Bacillales</taxon>
        <taxon>Staphylococcaceae</taxon>
        <taxon>Staphylococcus</taxon>
    </lineage>
</organism>
<reference key="1">
    <citation type="journal article" date="2005" name="J. Bacteriol.">
        <title>Insights on evolution of virulence and resistance from the complete genome analysis of an early methicillin-resistant Staphylococcus aureus strain and a biofilm-producing methicillin-resistant Staphylococcus epidermidis strain.</title>
        <authorList>
            <person name="Gill S.R."/>
            <person name="Fouts D.E."/>
            <person name="Archer G.L."/>
            <person name="Mongodin E.F."/>
            <person name="DeBoy R.T."/>
            <person name="Ravel J."/>
            <person name="Paulsen I.T."/>
            <person name="Kolonay J.F."/>
            <person name="Brinkac L.M."/>
            <person name="Beanan M.J."/>
            <person name="Dodson R.J."/>
            <person name="Daugherty S.C."/>
            <person name="Madupu R."/>
            <person name="Angiuoli S.V."/>
            <person name="Durkin A.S."/>
            <person name="Haft D.H."/>
            <person name="Vamathevan J.J."/>
            <person name="Khouri H."/>
            <person name="Utterback T.R."/>
            <person name="Lee C."/>
            <person name="Dimitrov G."/>
            <person name="Jiang L."/>
            <person name="Qin H."/>
            <person name="Weidman J."/>
            <person name="Tran K."/>
            <person name="Kang K.H."/>
            <person name="Hance I.R."/>
            <person name="Nelson K.E."/>
            <person name="Fraser C.M."/>
        </authorList>
    </citation>
    <scope>NUCLEOTIDE SEQUENCE [LARGE SCALE GENOMIC DNA]</scope>
    <source>
        <strain>ATCC 35984 / DSM 28319 / BCRC 17069 / CCUG 31568 / BM 3577 / RP62A</strain>
    </source>
</reference>
<sequence>MYAYIKGTLSQLFPTHVVVETCGIGYEIQTPNSYRFQKYLEKEVQIYTSLIVREDAQLLYGFINEEEKEMFLSLIKVTGIGPKSALAILASSTPHEVKLAIENENDAYLTQFPGIGKKTARQIVLDLKGKVTITEENSDDLLQTQVNGNEQNQIISEALLALQALGYSKRELTKVEKSLNKHNVNSVDEAVKIGLQTLVS</sequence>
<feature type="chain" id="PRO_0000094685" description="Holliday junction branch migration complex subunit RuvA">
    <location>
        <begin position="1"/>
        <end position="200"/>
    </location>
</feature>
<feature type="region of interest" description="Domain I" evidence="1">
    <location>
        <begin position="1"/>
        <end position="63"/>
    </location>
</feature>
<feature type="region of interest" description="Domain II" evidence="1">
    <location>
        <begin position="64"/>
        <end position="142"/>
    </location>
</feature>
<feature type="region of interest" description="Flexible linker" evidence="1">
    <location>
        <begin position="143"/>
        <end position="149"/>
    </location>
</feature>
<feature type="region of interest" description="Domain III" evidence="1">
    <location>
        <begin position="150"/>
        <end position="200"/>
    </location>
</feature>
<gene>
    <name evidence="1" type="primary">ruvA</name>
    <name type="ordered locus">SERP1206</name>
</gene>
<accession>Q5HNQ9</accession>